<sequence length="23" mass="2764">MWKKPAFIDLRLGLEVTLYISNR</sequence>
<reference key="1">
    <citation type="journal article" date="2003" name="Curr. Microbiol.">
        <title>Cloning and expression of pyrroloquinoline quinone (PQQ) genes from a phosphate-solubilizing bacterium Enterobacter intermedium.</title>
        <authorList>
            <person name="Kim C.H."/>
            <person name="Han S.H."/>
            <person name="Kim K.Y."/>
            <person name="Cho B.H."/>
            <person name="Kim Y.H."/>
            <person name="Koo B.S."/>
            <person name="Kim Y.C."/>
        </authorList>
    </citation>
    <scope>NUCLEOTIDE SEQUENCE [GENOMIC DNA]</scope>
</reference>
<name>PQQA_KLUIN</name>
<proteinExistence type="inferred from homology"/>
<evidence type="ECO:0000250" key="1"/>
<evidence type="ECO:0000305" key="2"/>
<keyword id="KW-0884">PQQ biosynthesis</keyword>
<protein>
    <recommendedName>
        <fullName>Coenzyme PQQ synthesis protein A</fullName>
    </recommendedName>
    <alternativeName>
        <fullName>Pyrroloquinoline quinone biosynthesis protein A</fullName>
    </alternativeName>
</protein>
<gene>
    <name type="primary">pqqA</name>
</gene>
<feature type="chain" id="PRO_0000220307" description="Coenzyme PQQ synthesis protein A">
    <location>
        <begin position="1"/>
        <end position="23"/>
    </location>
</feature>
<feature type="cross-link" description="Pyrroloquinoline quinone (Glu-Tyr)" evidence="1">
    <location>
        <begin position="15"/>
        <end position="19"/>
    </location>
</feature>
<dbReference type="EMBL" id="AY216683">
    <property type="protein sequence ID" value="AAP34378.1"/>
    <property type="molecule type" value="Genomic_DNA"/>
</dbReference>
<dbReference type="UniPathway" id="UPA00539"/>
<dbReference type="GO" id="GO:0018189">
    <property type="term" value="P:pyrroloquinoline quinone biosynthetic process"/>
    <property type="evidence" value="ECO:0007669"/>
    <property type="project" value="UniProtKB-UniRule"/>
</dbReference>
<dbReference type="HAMAP" id="MF_00656">
    <property type="entry name" value="PQQ_syn_PqqA"/>
    <property type="match status" value="1"/>
</dbReference>
<dbReference type="InterPro" id="IPR011725">
    <property type="entry name" value="PQQ_synth_PqqA"/>
</dbReference>
<dbReference type="NCBIfam" id="TIGR02107">
    <property type="entry name" value="PQQ_syn_pqqA"/>
    <property type="match status" value="1"/>
</dbReference>
<dbReference type="Pfam" id="PF08042">
    <property type="entry name" value="PqqA"/>
    <property type="match status" value="1"/>
</dbReference>
<accession>P59726</accession>
<comment type="function">
    <text evidence="1">Required for coenzyme pyrroloquinoline quinone (PQQ) biosynthesis. PQQ is probably formed by cross-linking a specific glutamate to a specific tyrosine residue and excising these residues from the peptide (By similarity).</text>
</comment>
<comment type="pathway">
    <text>Cofactor biosynthesis; pyrroloquinoline quinone biosynthesis.</text>
</comment>
<comment type="similarity">
    <text evidence="2">Belongs to the PqqA family.</text>
</comment>
<organism>
    <name type="scientific">Kluyvera intermedia</name>
    <name type="common">Enterobacter intermedius</name>
    <dbReference type="NCBI Taxonomy" id="61648"/>
    <lineage>
        <taxon>Bacteria</taxon>
        <taxon>Pseudomonadati</taxon>
        <taxon>Pseudomonadota</taxon>
        <taxon>Gammaproteobacteria</taxon>
        <taxon>Enterobacterales</taxon>
        <taxon>Enterobacteriaceae</taxon>
        <taxon>Kluyvera</taxon>
    </lineage>
</organism>